<feature type="chain" id="PRO_1000131002" description="Putative pre-16S rRNA nuclease">
    <location>
        <begin position="1"/>
        <end position="131"/>
    </location>
</feature>
<organism>
    <name type="scientific">Bordetella petrii (strain ATCC BAA-461 / DSM 12804 / CCUG 43448)</name>
    <dbReference type="NCBI Taxonomy" id="340100"/>
    <lineage>
        <taxon>Bacteria</taxon>
        <taxon>Pseudomonadati</taxon>
        <taxon>Pseudomonadota</taxon>
        <taxon>Betaproteobacteria</taxon>
        <taxon>Burkholderiales</taxon>
        <taxon>Alcaligenaceae</taxon>
        <taxon>Bordetella</taxon>
    </lineage>
</organism>
<keyword id="KW-0963">Cytoplasm</keyword>
<keyword id="KW-0378">Hydrolase</keyword>
<keyword id="KW-0540">Nuclease</keyword>
<keyword id="KW-0690">Ribosome biogenesis</keyword>
<comment type="function">
    <text evidence="1">Could be a nuclease involved in processing of the 5'-end of pre-16S rRNA.</text>
</comment>
<comment type="subcellular location">
    <subcellularLocation>
        <location evidence="1">Cytoplasm</location>
    </subcellularLocation>
</comment>
<comment type="similarity">
    <text evidence="1">Belongs to the YqgF nuclease family.</text>
</comment>
<protein>
    <recommendedName>
        <fullName evidence="1">Putative pre-16S rRNA nuclease</fullName>
        <ecNumber evidence="1">3.1.-.-</ecNumber>
    </recommendedName>
</protein>
<gene>
    <name type="ordered locus">Bpet0562</name>
</gene>
<reference key="1">
    <citation type="journal article" date="2008" name="BMC Genomics">
        <title>The missing link: Bordetella petrii is endowed with both the metabolic versatility of environmental bacteria and virulence traits of pathogenic Bordetellae.</title>
        <authorList>
            <person name="Gross R."/>
            <person name="Guzman C.A."/>
            <person name="Sebaihia M."/>
            <person name="Martin dos Santos V.A.P."/>
            <person name="Pieper D.H."/>
            <person name="Koebnik R."/>
            <person name="Lechner M."/>
            <person name="Bartels D."/>
            <person name="Buhrmester J."/>
            <person name="Choudhuri J.V."/>
            <person name="Ebensen T."/>
            <person name="Gaigalat L."/>
            <person name="Herrmann S."/>
            <person name="Khachane A.N."/>
            <person name="Larisch C."/>
            <person name="Link S."/>
            <person name="Linke B."/>
            <person name="Meyer F."/>
            <person name="Mormann S."/>
            <person name="Nakunst D."/>
            <person name="Rueckert C."/>
            <person name="Schneiker-Bekel S."/>
            <person name="Schulze K."/>
            <person name="Voerholter F.-J."/>
            <person name="Yevsa T."/>
            <person name="Engle J.T."/>
            <person name="Goldman W.E."/>
            <person name="Puehler A."/>
            <person name="Goebel U.B."/>
            <person name="Goesmann A."/>
            <person name="Bloecker H."/>
            <person name="Kaiser O."/>
            <person name="Martinez-Arias R."/>
        </authorList>
    </citation>
    <scope>NUCLEOTIDE SEQUENCE [LARGE SCALE GENOMIC DNA]</scope>
    <source>
        <strain>ATCC BAA-461 / DSM 12804 / CCUG 43448</strain>
    </source>
</reference>
<accession>A9I1T0</accession>
<sequence length="131" mass="14457">MPEETLLAFDFGEKKIGIAIGNTLTRQARPLEIIFSEIREARFARIGQLLQQWQPQRVVVGLALASDGGEQPATARCRRFANQLRGRYGLAVELVDERGSSMEAQRLLGTHAPDDAVAAAVILQRYLDALP</sequence>
<proteinExistence type="inferred from homology"/>
<evidence type="ECO:0000255" key="1">
    <source>
        <dbReference type="HAMAP-Rule" id="MF_00651"/>
    </source>
</evidence>
<dbReference type="EC" id="3.1.-.-" evidence="1"/>
<dbReference type="EMBL" id="AM902716">
    <property type="protein sequence ID" value="CAP40894.1"/>
    <property type="molecule type" value="Genomic_DNA"/>
</dbReference>
<dbReference type="SMR" id="A9I1T0"/>
<dbReference type="STRING" id="94624.Bpet0562"/>
<dbReference type="KEGG" id="bpt:Bpet0562"/>
<dbReference type="eggNOG" id="COG0816">
    <property type="taxonomic scope" value="Bacteria"/>
</dbReference>
<dbReference type="Proteomes" id="UP000001225">
    <property type="component" value="Chromosome"/>
</dbReference>
<dbReference type="GO" id="GO:0005829">
    <property type="term" value="C:cytosol"/>
    <property type="evidence" value="ECO:0007669"/>
    <property type="project" value="TreeGrafter"/>
</dbReference>
<dbReference type="GO" id="GO:0004518">
    <property type="term" value="F:nuclease activity"/>
    <property type="evidence" value="ECO:0007669"/>
    <property type="project" value="UniProtKB-KW"/>
</dbReference>
<dbReference type="GO" id="GO:0000967">
    <property type="term" value="P:rRNA 5'-end processing"/>
    <property type="evidence" value="ECO:0007669"/>
    <property type="project" value="UniProtKB-UniRule"/>
</dbReference>
<dbReference type="CDD" id="cd16964">
    <property type="entry name" value="YqgF"/>
    <property type="match status" value="1"/>
</dbReference>
<dbReference type="Gene3D" id="3.30.420.140">
    <property type="entry name" value="YqgF/RNase H-like domain"/>
    <property type="match status" value="1"/>
</dbReference>
<dbReference type="HAMAP" id="MF_00651">
    <property type="entry name" value="Nuclease_YqgF"/>
    <property type="match status" value="1"/>
</dbReference>
<dbReference type="InterPro" id="IPR012337">
    <property type="entry name" value="RNaseH-like_sf"/>
</dbReference>
<dbReference type="InterPro" id="IPR005227">
    <property type="entry name" value="YqgF"/>
</dbReference>
<dbReference type="InterPro" id="IPR006641">
    <property type="entry name" value="YqgF/RNaseH-like_dom"/>
</dbReference>
<dbReference type="InterPro" id="IPR037027">
    <property type="entry name" value="YqgF/RNaseH-like_dom_sf"/>
</dbReference>
<dbReference type="NCBIfam" id="TIGR00250">
    <property type="entry name" value="RNAse_H_YqgF"/>
    <property type="match status" value="1"/>
</dbReference>
<dbReference type="PANTHER" id="PTHR33317">
    <property type="entry name" value="POLYNUCLEOTIDYL TRANSFERASE, RIBONUCLEASE H-LIKE SUPERFAMILY PROTEIN"/>
    <property type="match status" value="1"/>
</dbReference>
<dbReference type="PANTHER" id="PTHR33317:SF4">
    <property type="entry name" value="POLYNUCLEOTIDYL TRANSFERASE, RIBONUCLEASE H-LIKE SUPERFAMILY PROTEIN"/>
    <property type="match status" value="1"/>
</dbReference>
<dbReference type="Pfam" id="PF03652">
    <property type="entry name" value="RuvX"/>
    <property type="match status" value="1"/>
</dbReference>
<dbReference type="SMART" id="SM00732">
    <property type="entry name" value="YqgFc"/>
    <property type="match status" value="1"/>
</dbReference>
<dbReference type="SUPFAM" id="SSF53098">
    <property type="entry name" value="Ribonuclease H-like"/>
    <property type="match status" value="1"/>
</dbReference>
<name>YQGF_BORPD</name>